<accession>Q8FT63</accession>
<dbReference type="EMBL" id="BA000035">
    <property type="protein sequence ID" value="BAC18518.1"/>
    <property type="status" value="ALT_INIT"/>
    <property type="molecule type" value="Genomic_DNA"/>
</dbReference>
<dbReference type="RefSeq" id="WP_143758448.1">
    <property type="nucleotide sequence ID" value="NC_004369.1"/>
</dbReference>
<dbReference type="SMR" id="Q8FT63"/>
<dbReference type="STRING" id="196164.gene:10742129"/>
<dbReference type="KEGG" id="cef:CE1708"/>
<dbReference type="eggNOG" id="COG1481">
    <property type="taxonomic scope" value="Bacteria"/>
</dbReference>
<dbReference type="HOGENOM" id="CLU_053282_0_0_11"/>
<dbReference type="OrthoDB" id="5197218at2"/>
<dbReference type="Proteomes" id="UP000001409">
    <property type="component" value="Chromosome"/>
</dbReference>
<dbReference type="GO" id="GO:0003677">
    <property type="term" value="F:DNA binding"/>
    <property type="evidence" value="ECO:0007669"/>
    <property type="project" value="UniProtKB-UniRule"/>
</dbReference>
<dbReference type="GO" id="GO:0051301">
    <property type="term" value="P:cell division"/>
    <property type="evidence" value="ECO:0007669"/>
    <property type="project" value="UniProtKB-UniRule"/>
</dbReference>
<dbReference type="GO" id="GO:0043937">
    <property type="term" value="P:regulation of sporulation"/>
    <property type="evidence" value="ECO:0007669"/>
    <property type="project" value="InterPro"/>
</dbReference>
<dbReference type="FunFam" id="3.10.28.10:FF:000001">
    <property type="entry name" value="Probable cell division protein WhiA"/>
    <property type="match status" value="1"/>
</dbReference>
<dbReference type="Gene3D" id="3.10.28.10">
    <property type="entry name" value="Homing endonucleases"/>
    <property type="match status" value="1"/>
</dbReference>
<dbReference type="HAMAP" id="MF_01420">
    <property type="entry name" value="HTH_type_WhiA"/>
    <property type="match status" value="1"/>
</dbReference>
<dbReference type="InterPro" id="IPR027434">
    <property type="entry name" value="Homing_endonucl"/>
</dbReference>
<dbReference type="InterPro" id="IPR018478">
    <property type="entry name" value="Sporu_reg_WhiA_N_dom"/>
</dbReference>
<dbReference type="InterPro" id="IPR003802">
    <property type="entry name" value="Sporulation_regulator_WhiA"/>
</dbReference>
<dbReference type="InterPro" id="IPR023054">
    <property type="entry name" value="Sporulation_regulator_WhiA_C"/>
</dbReference>
<dbReference type="InterPro" id="IPR039518">
    <property type="entry name" value="WhiA_LAGLIDADG_dom"/>
</dbReference>
<dbReference type="NCBIfam" id="TIGR00647">
    <property type="entry name" value="DNA_bind_WhiA"/>
    <property type="match status" value="1"/>
</dbReference>
<dbReference type="PANTHER" id="PTHR37307">
    <property type="entry name" value="CELL DIVISION PROTEIN WHIA-RELATED"/>
    <property type="match status" value="1"/>
</dbReference>
<dbReference type="PANTHER" id="PTHR37307:SF1">
    <property type="entry name" value="CELL DIVISION PROTEIN WHIA-RELATED"/>
    <property type="match status" value="1"/>
</dbReference>
<dbReference type="Pfam" id="PF02650">
    <property type="entry name" value="HTH_WhiA"/>
    <property type="match status" value="1"/>
</dbReference>
<dbReference type="Pfam" id="PF14527">
    <property type="entry name" value="LAGLIDADG_WhiA"/>
    <property type="match status" value="1"/>
</dbReference>
<dbReference type="Pfam" id="PF10298">
    <property type="entry name" value="WhiA_N"/>
    <property type="match status" value="1"/>
</dbReference>
<organism>
    <name type="scientific">Corynebacterium efficiens (strain DSM 44549 / YS-314 / AJ 12310 / JCM 11189 / NBRC 100395)</name>
    <dbReference type="NCBI Taxonomy" id="196164"/>
    <lineage>
        <taxon>Bacteria</taxon>
        <taxon>Bacillati</taxon>
        <taxon>Actinomycetota</taxon>
        <taxon>Actinomycetes</taxon>
        <taxon>Mycobacteriales</taxon>
        <taxon>Corynebacteriaceae</taxon>
        <taxon>Corynebacterium</taxon>
    </lineage>
</organism>
<evidence type="ECO:0000255" key="1">
    <source>
        <dbReference type="HAMAP-Rule" id="MF_01420"/>
    </source>
</evidence>
<evidence type="ECO:0000305" key="2"/>
<keyword id="KW-0131">Cell cycle</keyword>
<keyword id="KW-0132">Cell division</keyword>
<keyword id="KW-0238">DNA-binding</keyword>
<keyword id="KW-1185">Reference proteome</keyword>
<proteinExistence type="inferred from homology"/>
<reference key="1">
    <citation type="journal article" date="2003" name="Genome Res.">
        <title>Comparative complete genome sequence analysis of the amino acid replacements responsible for the thermostability of Corynebacterium efficiens.</title>
        <authorList>
            <person name="Nishio Y."/>
            <person name="Nakamura Y."/>
            <person name="Kawarabayasi Y."/>
            <person name="Usuda Y."/>
            <person name="Kimura E."/>
            <person name="Sugimoto S."/>
            <person name="Matsui K."/>
            <person name="Yamagishi A."/>
            <person name="Kikuchi H."/>
            <person name="Ikeo K."/>
            <person name="Gojobori T."/>
        </authorList>
    </citation>
    <scope>NUCLEOTIDE SEQUENCE [LARGE SCALE GENOMIC DNA]</scope>
    <source>
        <strain>DSM 44549 / YS-314 / AJ 12310 / JCM 11189 / NBRC 100395</strain>
    </source>
</reference>
<sequence>MSLTTDIKDELARVSVTRQSAKAAEVSALLRFAGEMQAIAGRLVIEVNLDSMAVARRLQEFISQLYDTDVQVHTVTPGGARKNPKYLVRIVHNADEVARRAGLVTRSGHLIRGLSPQVISGTISEAEAAWRGAFLAGGSLTDPGRSSALEVVCPCQEAALALVGCARRIGVTAKTKDSRGSERVVVRDAEAIGALLTRIGAQKSRIVWEEKRLSREVRTPANRLANFDDANLRRSARAAVAAAARVERAMKILGDDVPEHLAEAGQLRVQHRQASLEELGRLADPQMTKDAVAGRIRRLLTTADKRARDLGIPDTTVAVTEELLDEL</sequence>
<gene>
    <name evidence="1" type="primary">whiA</name>
    <name type="ordered locus">CE1708</name>
</gene>
<name>WHIA_COREF</name>
<feature type="chain" id="PRO_0000376473" description="Probable cell division protein WhiA">
    <location>
        <begin position="1"/>
        <end position="327"/>
    </location>
</feature>
<feature type="DNA-binding region" description="H-T-H motif" evidence="1">
    <location>
        <begin position="275"/>
        <end position="308"/>
    </location>
</feature>
<protein>
    <recommendedName>
        <fullName evidence="1">Probable cell division protein WhiA</fullName>
    </recommendedName>
</protein>
<comment type="function">
    <text evidence="1">Involved in cell division and chromosome segregation.</text>
</comment>
<comment type="similarity">
    <text evidence="1">Belongs to the WhiA family.</text>
</comment>
<comment type="sequence caution" evidence="2">
    <conflict type="erroneous initiation">
        <sequence resource="EMBL-CDS" id="BAC18518"/>
    </conflict>
</comment>